<accession>A1RJC1</accession>
<dbReference type="EMBL" id="CP000503">
    <property type="protein sequence ID" value="ABM24766.1"/>
    <property type="molecule type" value="Genomic_DNA"/>
</dbReference>
<dbReference type="RefSeq" id="WP_011789257.1">
    <property type="nucleotide sequence ID" value="NC_008750.1"/>
</dbReference>
<dbReference type="SMR" id="A1RJC1"/>
<dbReference type="KEGG" id="shw:Sputw3181_1931"/>
<dbReference type="HOGENOM" id="CLU_023403_2_0_6"/>
<dbReference type="UniPathway" id="UPA00637"/>
<dbReference type="Proteomes" id="UP000002597">
    <property type="component" value="Chromosome"/>
</dbReference>
<dbReference type="GO" id="GO:0030288">
    <property type="term" value="C:outer membrane-bounded periplasmic space"/>
    <property type="evidence" value="ECO:0007669"/>
    <property type="project" value="TreeGrafter"/>
</dbReference>
<dbReference type="GO" id="GO:0030246">
    <property type="term" value="F:carbohydrate binding"/>
    <property type="evidence" value="ECO:0007669"/>
    <property type="project" value="InterPro"/>
</dbReference>
<dbReference type="GO" id="GO:0003824">
    <property type="term" value="F:catalytic activity"/>
    <property type="evidence" value="ECO:0007669"/>
    <property type="project" value="InterPro"/>
</dbReference>
<dbReference type="GO" id="GO:0051274">
    <property type="term" value="P:beta-glucan biosynthetic process"/>
    <property type="evidence" value="ECO:0007669"/>
    <property type="project" value="TreeGrafter"/>
</dbReference>
<dbReference type="FunFam" id="2.60.40.10:FF:001915">
    <property type="entry name" value="Glucans biosynthesis protein G"/>
    <property type="match status" value="1"/>
</dbReference>
<dbReference type="FunFam" id="2.70.98.10:FF:000001">
    <property type="entry name" value="Glucans biosynthesis protein G"/>
    <property type="match status" value="1"/>
</dbReference>
<dbReference type="Gene3D" id="2.70.98.10">
    <property type="match status" value="1"/>
</dbReference>
<dbReference type="Gene3D" id="2.60.40.10">
    <property type="entry name" value="Immunoglobulins"/>
    <property type="match status" value="1"/>
</dbReference>
<dbReference type="HAMAP" id="MF_01069">
    <property type="entry name" value="MdoG_OpgG"/>
    <property type="match status" value="1"/>
</dbReference>
<dbReference type="InterPro" id="IPR011013">
    <property type="entry name" value="Gal_mutarotase_sf_dom"/>
</dbReference>
<dbReference type="InterPro" id="IPR014718">
    <property type="entry name" value="GH-type_carb-bd"/>
</dbReference>
<dbReference type="InterPro" id="IPR014438">
    <property type="entry name" value="Glucan_biosyn_MdoG/MdoD"/>
</dbReference>
<dbReference type="InterPro" id="IPR007444">
    <property type="entry name" value="Glucan_biosyn_MdoG_C"/>
</dbReference>
<dbReference type="InterPro" id="IPR013783">
    <property type="entry name" value="Ig-like_fold"/>
</dbReference>
<dbReference type="InterPro" id="IPR014756">
    <property type="entry name" value="Ig_E-set"/>
</dbReference>
<dbReference type="InterPro" id="IPR023704">
    <property type="entry name" value="MdoG_OpgG"/>
</dbReference>
<dbReference type="PANTHER" id="PTHR30504">
    <property type="entry name" value="GLUCANS BIOSYNTHESIS PROTEIN"/>
    <property type="match status" value="1"/>
</dbReference>
<dbReference type="PANTHER" id="PTHR30504:SF2">
    <property type="entry name" value="GLUCANS BIOSYNTHESIS PROTEIN G"/>
    <property type="match status" value="1"/>
</dbReference>
<dbReference type="Pfam" id="PF04349">
    <property type="entry name" value="MdoG"/>
    <property type="match status" value="1"/>
</dbReference>
<dbReference type="PIRSF" id="PIRSF006281">
    <property type="entry name" value="MdoG"/>
    <property type="match status" value="1"/>
</dbReference>
<dbReference type="SUPFAM" id="SSF81296">
    <property type="entry name" value="E set domains"/>
    <property type="match status" value="1"/>
</dbReference>
<dbReference type="SUPFAM" id="SSF74650">
    <property type="entry name" value="Galactose mutarotase-like"/>
    <property type="match status" value="1"/>
</dbReference>
<gene>
    <name evidence="1" type="primary">opgG</name>
    <name type="ordered locus">Sputw3181_1931</name>
</gene>
<evidence type="ECO:0000255" key="1">
    <source>
        <dbReference type="HAMAP-Rule" id="MF_01069"/>
    </source>
</evidence>
<reference key="1">
    <citation type="submission" date="2006-12" db="EMBL/GenBank/DDBJ databases">
        <title>Complete sequence of Shewanella sp. W3-18-1.</title>
        <authorList>
            <consortium name="US DOE Joint Genome Institute"/>
            <person name="Copeland A."/>
            <person name="Lucas S."/>
            <person name="Lapidus A."/>
            <person name="Barry K."/>
            <person name="Detter J.C."/>
            <person name="Glavina del Rio T."/>
            <person name="Hammon N."/>
            <person name="Israni S."/>
            <person name="Dalin E."/>
            <person name="Tice H."/>
            <person name="Pitluck S."/>
            <person name="Chain P."/>
            <person name="Malfatti S."/>
            <person name="Shin M."/>
            <person name="Vergez L."/>
            <person name="Schmutz J."/>
            <person name="Larimer F."/>
            <person name="Land M."/>
            <person name="Hauser L."/>
            <person name="Kyrpides N."/>
            <person name="Lykidis A."/>
            <person name="Tiedje J."/>
            <person name="Richardson P."/>
        </authorList>
    </citation>
    <scope>NUCLEOTIDE SEQUENCE [LARGE SCALE GENOMIC DNA]</scope>
    <source>
        <strain>W3-18-1</strain>
    </source>
</reference>
<sequence length="544" mass="60846">MVSLLRCQSSKPYSSLICSLALGVAFALSGTAYAEETKPTETVPAPVVTPPKVTPPPATKNQVRFTKTGAFDSDYVVKLARKLAAKPYSVLKDPLPVGLAKLTYDEYRDIRFNPTASIWRDQGLPFQMQMFHRGFYFQDLIEIAIVEGNKATHLAYEPKYFTAGEVITQALPNDDIGYSGFRIHNQLNNNGVFDELMVFQGASYFRALGKGNAYGLSARGLALKTADPEGEEFPIFRAFWVERPHYDSNLIVVHALLDSPSVAGAYRFSVRPGDNTQIDVEATLFPRVELSKVGLAPSTSMFLHSLNGRHDTDDFRPEVHDSDGLLMFNGRGEHLWRPLANPRQLQVSAFSDNSPQGFGLIQRERSYAAYQDLEAQYERRPSLWIEPVGNWGQGAVVLTEIPTESEIHDNIVSFWKPRQPIPAGSEYHFAYRMSWGEEPAVKHNYVVVSRTASGRADIAKPTPRRLFVVDYQVNGAMPEELPLAKVEASGGIISNVVIAPNAANNGYRLAFELEPEGKELIELRAELKFPTPRQVETWLYRWTL</sequence>
<feature type="signal peptide" evidence="1">
    <location>
        <begin position="1"/>
        <end position="34"/>
    </location>
</feature>
<feature type="chain" id="PRO_5000203993" description="Glucans biosynthesis protein G">
    <location>
        <begin position="35"/>
        <end position="544"/>
    </location>
</feature>
<protein>
    <recommendedName>
        <fullName evidence="1">Glucans biosynthesis protein G</fullName>
    </recommendedName>
</protein>
<name>OPGG_SHESW</name>
<keyword id="KW-0574">Periplasm</keyword>
<keyword id="KW-0732">Signal</keyword>
<organism>
    <name type="scientific">Shewanella sp. (strain W3-18-1)</name>
    <dbReference type="NCBI Taxonomy" id="351745"/>
    <lineage>
        <taxon>Bacteria</taxon>
        <taxon>Pseudomonadati</taxon>
        <taxon>Pseudomonadota</taxon>
        <taxon>Gammaproteobacteria</taxon>
        <taxon>Alteromonadales</taxon>
        <taxon>Shewanellaceae</taxon>
        <taxon>Shewanella</taxon>
    </lineage>
</organism>
<proteinExistence type="inferred from homology"/>
<comment type="function">
    <text evidence="1">Involved in the biosynthesis of osmoregulated periplasmic glucans (OPGs).</text>
</comment>
<comment type="pathway">
    <text evidence="1">Glycan metabolism; osmoregulated periplasmic glucan (OPG) biosynthesis.</text>
</comment>
<comment type="subcellular location">
    <subcellularLocation>
        <location evidence="1">Periplasm</location>
    </subcellularLocation>
</comment>
<comment type="similarity">
    <text evidence="1">Belongs to the OpgD/OpgG family.</text>
</comment>